<protein>
    <recommendedName>
        <fullName>Dehydrogenase/reductase SDR family protein 7-like</fullName>
        <ecNumber>1.1.-.-</ecNumber>
    </recommendedName>
</protein>
<sequence>MKVQDMDKCAPSSDWNVLYWVLGTVLMPVALPLAIINIWQRFQAQKFRNQLPGKVVLITGASSGLGESLAHVFYRAGCRVILAARRTQELERVKKDLLALDVDPAYPPTVLPLDLAELNSIPEFVTRVLAVYNQVDILINNGGISVRADVASTAVDVDLKVMVVNYFGSVALTKALLPSMVKRGSGHICFISSVQGKFAIPQRAAYSASKHAMQAFADSLRAEVANKNINVSCVSPGYIRTQLSLNALTGSGSSYGKVDETTAKGMSPDKLAERILQCILRKEPDIIVSDVQAKIAYYLRHLCPSLYFWIMAKRAVKLENAEKKST</sequence>
<evidence type="ECO:0000250" key="1"/>
<evidence type="ECO:0000255" key="2"/>
<evidence type="ECO:0000255" key="3">
    <source>
        <dbReference type="PROSITE-ProRule" id="PRU10001"/>
    </source>
</evidence>
<evidence type="ECO:0000305" key="4"/>
<dbReference type="EC" id="1.1.-.-"/>
<dbReference type="EMBL" id="AE014297">
    <property type="protein sequence ID" value="AAF56927.1"/>
    <property type="molecule type" value="Genomic_DNA"/>
</dbReference>
<dbReference type="EMBL" id="AF145631">
    <property type="protein sequence ID" value="AAD38606.1"/>
    <property type="molecule type" value="mRNA"/>
</dbReference>
<dbReference type="RefSeq" id="NP_651717.1">
    <property type="nucleotide sequence ID" value="NM_143460.4"/>
</dbReference>
<dbReference type="SMR" id="Q9Y140"/>
<dbReference type="BioGRID" id="68366">
    <property type="interactions" value="6"/>
</dbReference>
<dbReference type="FunCoup" id="Q9Y140">
    <property type="interactions" value="103"/>
</dbReference>
<dbReference type="IntAct" id="Q9Y140">
    <property type="interactions" value="10"/>
</dbReference>
<dbReference type="STRING" id="7227.FBpp0084910"/>
<dbReference type="PaxDb" id="7227-FBpp0084910"/>
<dbReference type="DNASU" id="43502"/>
<dbReference type="EnsemblMetazoa" id="FBtr0085544">
    <property type="protein sequence ID" value="FBpp0084910"/>
    <property type="gene ID" value="FBgn0027583"/>
</dbReference>
<dbReference type="GeneID" id="43502"/>
<dbReference type="KEGG" id="dme:Dmel_CG7601"/>
<dbReference type="UCSC" id="CG7601-RA">
    <property type="organism name" value="d. melanogaster"/>
</dbReference>
<dbReference type="AGR" id="FB:FBgn0027583"/>
<dbReference type="FlyBase" id="FBgn0027583">
    <property type="gene designation" value="CG7601"/>
</dbReference>
<dbReference type="VEuPathDB" id="VectorBase:FBgn0027583"/>
<dbReference type="eggNOG" id="KOG1205">
    <property type="taxonomic scope" value="Eukaryota"/>
</dbReference>
<dbReference type="GeneTree" id="ENSGT00940000170022"/>
<dbReference type="HOGENOM" id="CLU_010194_2_1_1"/>
<dbReference type="InParanoid" id="Q9Y140"/>
<dbReference type="OMA" id="YFWIMAK"/>
<dbReference type="OrthoDB" id="5307821at2759"/>
<dbReference type="PhylomeDB" id="Q9Y140"/>
<dbReference type="Reactome" id="R-DME-75896">
    <property type="pathway name" value="Plasmalogen biosynthesis"/>
</dbReference>
<dbReference type="BioGRID-ORCS" id="43502">
    <property type="hits" value="1 hit in 3 CRISPR screens"/>
</dbReference>
<dbReference type="GenomeRNAi" id="43502"/>
<dbReference type="PRO" id="PR:Q9Y140"/>
<dbReference type="Proteomes" id="UP000000803">
    <property type="component" value="Chromosome 3R"/>
</dbReference>
<dbReference type="Bgee" id="FBgn0027583">
    <property type="expression patterns" value="Expressed in thoracico-abdominal ganglion (Drosophila) and 102 other cell types or tissues"/>
</dbReference>
<dbReference type="GO" id="GO:0016020">
    <property type="term" value="C:membrane"/>
    <property type="evidence" value="ECO:0000318"/>
    <property type="project" value="GO_Central"/>
</dbReference>
<dbReference type="GO" id="GO:0005778">
    <property type="term" value="C:peroxisomal membrane"/>
    <property type="evidence" value="ECO:0007669"/>
    <property type="project" value="UniProtKB-SubCell"/>
</dbReference>
<dbReference type="GO" id="GO:0004745">
    <property type="term" value="F:all-trans-retinol dehydrogenase (NAD+) activity"/>
    <property type="evidence" value="ECO:0000250"/>
    <property type="project" value="FlyBase"/>
</dbReference>
<dbReference type="CDD" id="cd05332">
    <property type="entry name" value="11beta-HSD1_like_SDR_c"/>
    <property type="match status" value="1"/>
</dbReference>
<dbReference type="Gene3D" id="3.40.50.720">
    <property type="entry name" value="NAD(P)-binding Rossmann-like Domain"/>
    <property type="match status" value="1"/>
</dbReference>
<dbReference type="InterPro" id="IPR036291">
    <property type="entry name" value="NAD(P)-bd_dom_sf"/>
</dbReference>
<dbReference type="InterPro" id="IPR020904">
    <property type="entry name" value="Sc_DH/Rdtase_CS"/>
</dbReference>
<dbReference type="InterPro" id="IPR002347">
    <property type="entry name" value="SDR_fam"/>
</dbReference>
<dbReference type="NCBIfam" id="NF004825">
    <property type="entry name" value="PRK06181.1"/>
    <property type="match status" value="1"/>
</dbReference>
<dbReference type="PANTHER" id="PTHR44196">
    <property type="entry name" value="DEHYDROGENASE/REDUCTASE SDR FAMILY MEMBER 7B"/>
    <property type="match status" value="1"/>
</dbReference>
<dbReference type="PANTHER" id="PTHR44196:SF1">
    <property type="entry name" value="DEHYDROGENASE_REDUCTASE SDR FAMILY MEMBER 7B"/>
    <property type="match status" value="1"/>
</dbReference>
<dbReference type="Pfam" id="PF00106">
    <property type="entry name" value="adh_short"/>
    <property type="match status" value="1"/>
</dbReference>
<dbReference type="PRINTS" id="PR00081">
    <property type="entry name" value="GDHRDH"/>
</dbReference>
<dbReference type="PRINTS" id="PR00080">
    <property type="entry name" value="SDRFAMILY"/>
</dbReference>
<dbReference type="SMART" id="SM00822">
    <property type="entry name" value="PKS_KR"/>
    <property type="match status" value="1"/>
</dbReference>
<dbReference type="SUPFAM" id="SSF51735">
    <property type="entry name" value="NAD(P)-binding Rossmann-fold domains"/>
    <property type="match status" value="1"/>
</dbReference>
<dbReference type="PROSITE" id="PS00061">
    <property type="entry name" value="ADH_SHORT"/>
    <property type="match status" value="1"/>
</dbReference>
<proteinExistence type="evidence at transcript level"/>
<feature type="chain" id="PRO_0000312113" description="Dehydrogenase/reductase SDR family protein 7-like">
    <location>
        <begin position="1"/>
        <end position="326"/>
    </location>
</feature>
<feature type="topological domain" description="Cytoplasmic" evidence="2">
    <location>
        <begin position="1"/>
        <end position="17"/>
    </location>
</feature>
<feature type="transmembrane region" description="Helical; Signal-anchor for type II membrane protein" evidence="2">
    <location>
        <begin position="18"/>
        <end position="38"/>
    </location>
</feature>
<feature type="topological domain" description="Peroxisomal" evidence="2">
    <location>
        <begin position="39"/>
        <end position="326"/>
    </location>
</feature>
<feature type="active site" description="Proton acceptor" evidence="3">
    <location>
        <position position="206"/>
    </location>
</feature>
<feature type="binding site" evidence="1">
    <location>
        <begin position="57"/>
        <end position="81"/>
    </location>
    <ligand>
        <name>NAD(+)</name>
        <dbReference type="ChEBI" id="CHEBI:57540"/>
    </ligand>
</feature>
<feature type="binding site" evidence="2">
    <location>
        <position position="193"/>
    </location>
    <ligand>
        <name>substrate</name>
    </ligand>
</feature>
<organism>
    <name type="scientific">Drosophila melanogaster</name>
    <name type="common">Fruit fly</name>
    <dbReference type="NCBI Taxonomy" id="7227"/>
    <lineage>
        <taxon>Eukaryota</taxon>
        <taxon>Metazoa</taxon>
        <taxon>Ecdysozoa</taxon>
        <taxon>Arthropoda</taxon>
        <taxon>Hexapoda</taxon>
        <taxon>Insecta</taxon>
        <taxon>Pterygota</taxon>
        <taxon>Neoptera</taxon>
        <taxon>Endopterygota</taxon>
        <taxon>Diptera</taxon>
        <taxon>Brachycera</taxon>
        <taxon>Muscomorpha</taxon>
        <taxon>Ephydroidea</taxon>
        <taxon>Drosophilidae</taxon>
        <taxon>Drosophila</taxon>
        <taxon>Sophophora</taxon>
    </lineage>
</organism>
<comment type="function">
    <text evidence="4">Putative oxidoreductase.</text>
</comment>
<comment type="subcellular location">
    <subcellularLocation>
        <location evidence="4">Peroxisome membrane</location>
        <topology evidence="4">Single-pass type II membrane protein</topology>
    </subcellularLocation>
</comment>
<comment type="similarity">
    <text evidence="4">Belongs to the short-chain dehydrogenases/reductases (SDR) family.</text>
</comment>
<name>DHRS7_DROME</name>
<keyword id="KW-0472">Membrane</keyword>
<keyword id="KW-0520">NAD</keyword>
<keyword id="KW-0521">NADP</keyword>
<keyword id="KW-0560">Oxidoreductase</keyword>
<keyword id="KW-0576">Peroxisome</keyword>
<keyword id="KW-1185">Reference proteome</keyword>
<keyword id="KW-0735">Signal-anchor</keyword>
<keyword id="KW-0812">Transmembrane</keyword>
<keyword id="KW-1133">Transmembrane helix</keyword>
<gene>
    <name type="ORF">CG7601</name>
</gene>
<accession>Q9Y140</accession>
<reference key="1">
    <citation type="journal article" date="2000" name="Science">
        <title>The genome sequence of Drosophila melanogaster.</title>
        <authorList>
            <person name="Adams M.D."/>
            <person name="Celniker S.E."/>
            <person name="Holt R.A."/>
            <person name="Evans C.A."/>
            <person name="Gocayne J.D."/>
            <person name="Amanatides P.G."/>
            <person name="Scherer S.E."/>
            <person name="Li P.W."/>
            <person name="Hoskins R.A."/>
            <person name="Galle R.F."/>
            <person name="George R.A."/>
            <person name="Lewis S.E."/>
            <person name="Richards S."/>
            <person name="Ashburner M."/>
            <person name="Henderson S.N."/>
            <person name="Sutton G.G."/>
            <person name="Wortman J.R."/>
            <person name="Yandell M.D."/>
            <person name="Zhang Q."/>
            <person name="Chen L.X."/>
            <person name="Brandon R.C."/>
            <person name="Rogers Y.-H.C."/>
            <person name="Blazej R.G."/>
            <person name="Champe M."/>
            <person name="Pfeiffer B.D."/>
            <person name="Wan K.H."/>
            <person name="Doyle C."/>
            <person name="Baxter E.G."/>
            <person name="Helt G."/>
            <person name="Nelson C.R."/>
            <person name="Miklos G.L.G."/>
            <person name="Abril J.F."/>
            <person name="Agbayani A."/>
            <person name="An H.-J."/>
            <person name="Andrews-Pfannkoch C."/>
            <person name="Baldwin D."/>
            <person name="Ballew R.M."/>
            <person name="Basu A."/>
            <person name="Baxendale J."/>
            <person name="Bayraktaroglu L."/>
            <person name="Beasley E.M."/>
            <person name="Beeson K.Y."/>
            <person name="Benos P.V."/>
            <person name="Berman B.P."/>
            <person name="Bhandari D."/>
            <person name="Bolshakov S."/>
            <person name="Borkova D."/>
            <person name="Botchan M.R."/>
            <person name="Bouck J."/>
            <person name="Brokstein P."/>
            <person name="Brottier P."/>
            <person name="Burtis K.C."/>
            <person name="Busam D.A."/>
            <person name="Butler H."/>
            <person name="Cadieu E."/>
            <person name="Center A."/>
            <person name="Chandra I."/>
            <person name="Cherry J.M."/>
            <person name="Cawley S."/>
            <person name="Dahlke C."/>
            <person name="Davenport L.B."/>
            <person name="Davies P."/>
            <person name="de Pablos B."/>
            <person name="Delcher A."/>
            <person name="Deng Z."/>
            <person name="Mays A.D."/>
            <person name="Dew I."/>
            <person name="Dietz S.M."/>
            <person name="Dodson K."/>
            <person name="Doup L.E."/>
            <person name="Downes M."/>
            <person name="Dugan-Rocha S."/>
            <person name="Dunkov B.C."/>
            <person name="Dunn P."/>
            <person name="Durbin K.J."/>
            <person name="Evangelista C.C."/>
            <person name="Ferraz C."/>
            <person name="Ferriera S."/>
            <person name="Fleischmann W."/>
            <person name="Fosler C."/>
            <person name="Gabrielian A.E."/>
            <person name="Garg N.S."/>
            <person name="Gelbart W.M."/>
            <person name="Glasser K."/>
            <person name="Glodek A."/>
            <person name="Gong F."/>
            <person name="Gorrell J.H."/>
            <person name="Gu Z."/>
            <person name="Guan P."/>
            <person name="Harris M."/>
            <person name="Harris N.L."/>
            <person name="Harvey D.A."/>
            <person name="Heiman T.J."/>
            <person name="Hernandez J.R."/>
            <person name="Houck J."/>
            <person name="Hostin D."/>
            <person name="Houston K.A."/>
            <person name="Howland T.J."/>
            <person name="Wei M.-H."/>
            <person name="Ibegwam C."/>
            <person name="Jalali M."/>
            <person name="Kalush F."/>
            <person name="Karpen G.H."/>
            <person name="Ke Z."/>
            <person name="Kennison J.A."/>
            <person name="Ketchum K.A."/>
            <person name="Kimmel B.E."/>
            <person name="Kodira C.D."/>
            <person name="Kraft C.L."/>
            <person name="Kravitz S."/>
            <person name="Kulp D."/>
            <person name="Lai Z."/>
            <person name="Lasko P."/>
            <person name="Lei Y."/>
            <person name="Levitsky A.A."/>
            <person name="Li J.H."/>
            <person name="Li Z."/>
            <person name="Liang Y."/>
            <person name="Lin X."/>
            <person name="Liu X."/>
            <person name="Mattei B."/>
            <person name="McIntosh T.C."/>
            <person name="McLeod M.P."/>
            <person name="McPherson D."/>
            <person name="Merkulov G."/>
            <person name="Milshina N.V."/>
            <person name="Mobarry C."/>
            <person name="Morris J."/>
            <person name="Moshrefi A."/>
            <person name="Mount S.M."/>
            <person name="Moy M."/>
            <person name="Murphy B."/>
            <person name="Murphy L."/>
            <person name="Muzny D.M."/>
            <person name="Nelson D.L."/>
            <person name="Nelson D.R."/>
            <person name="Nelson K.A."/>
            <person name="Nixon K."/>
            <person name="Nusskern D.R."/>
            <person name="Pacleb J.M."/>
            <person name="Palazzolo M."/>
            <person name="Pittman G.S."/>
            <person name="Pan S."/>
            <person name="Pollard J."/>
            <person name="Puri V."/>
            <person name="Reese M.G."/>
            <person name="Reinert K."/>
            <person name="Remington K."/>
            <person name="Saunders R.D.C."/>
            <person name="Scheeler F."/>
            <person name="Shen H."/>
            <person name="Shue B.C."/>
            <person name="Siden-Kiamos I."/>
            <person name="Simpson M."/>
            <person name="Skupski M.P."/>
            <person name="Smith T.J."/>
            <person name="Spier E."/>
            <person name="Spradling A.C."/>
            <person name="Stapleton M."/>
            <person name="Strong R."/>
            <person name="Sun E."/>
            <person name="Svirskas R."/>
            <person name="Tector C."/>
            <person name="Turner R."/>
            <person name="Venter E."/>
            <person name="Wang A.H."/>
            <person name="Wang X."/>
            <person name="Wang Z.-Y."/>
            <person name="Wassarman D.A."/>
            <person name="Weinstock G.M."/>
            <person name="Weissenbach J."/>
            <person name="Williams S.M."/>
            <person name="Woodage T."/>
            <person name="Worley K.C."/>
            <person name="Wu D."/>
            <person name="Yang S."/>
            <person name="Yao Q.A."/>
            <person name="Ye J."/>
            <person name="Yeh R.-F."/>
            <person name="Zaveri J.S."/>
            <person name="Zhan M."/>
            <person name="Zhang G."/>
            <person name="Zhao Q."/>
            <person name="Zheng L."/>
            <person name="Zheng X.H."/>
            <person name="Zhong F.N."/>
            <person name="Zhong W."/>
            <person name="Zhou X."/>
            <person name="Zhu S.C."/>
            <person name="Zhu X."/>
            <person name="Smith H.O."/>
            <person name="Gibbs R.A."/>
            <person name="Myers E.W."/>
            <person name="Rubin G.M."/>
            <person name="Venter J.C."/>
        </authorList>
    </citation>
    <scope>NUCLEOTIDE SEQUENCE [LARGE SCALE GENOMIC DNA]</scope>
    <source>
        <strain>Berkeley</strain>
    </source>
</reference>
<reference key="2">
    <citation type="journal article" date="2002" name="Genome Biol.">
        <title>Annotation of the Drosophila melanogaster euchromatic genome: a systematic review.</title>
        <authorList>
            <person name="Misra S."/>
            <person name="Crosby M.A."/>
            <person name="Mungall C.J."/>
            <person name="Matthews B.B."/>
            <person name="Campbell K.S."/>
            <person name="Hradecky P."/>
            <person name="Huang Y."/>
            <person name="Kaminker J.S."/>
            <person name="Millburn G.H."/>
            <person name="Prochnik S.E."/>
            <person name="Smith C.D."/>
            <person name="Tupy J.L."/>
            <person name="Whitfield E.J."/>
            <person name="Bayraktaroglu L."/>
            <person name="Berman B.P."/>
            <person name="Bettencourt B.R."/>
            <person name="Celniker S.E."/>
            <person name="de Grey A.D.N.J."/>
            <person name="Drysdale R.A."/>
            <person name="Harris N.L."/>
            <person name="Richter J."/>
            <person name="Russo S."/>
            <person name="Schroeder A.J."/>
            <person name="Shu S.Q."/>
            <person name="Stapleton M."/>
            <person name="Yamada C."/>
            <person name="Ashburner M."/>
            <person name="Gelbart W.M."/>
            <person name="Rubin G.M."/>
            <person name="Lewis S.E."/>
        </authorList>
    </citation>
    <scope>GENOME REANNOTATION</scope>
    <source>
        <strain>Berkeley</strain>
    </source>
</reference>
<reference key="3">
    <citation type="journal article" date="2000" name="Science">
        <title>A Drosophila complementary DNA resource.</title>
        <authorList>
            <person name="Rubin G.M."/>
            <person name="Hong L."/>
            <person name="Brokstein P."/>
            <person name="Evans-Holm M."/>
            <person name="Frise E."/>
            <person name="Stapleton M."/>
            <person name="Harvey D.A."/>
        </authorList>
    </citation>
    <scope>NUCLEOTIDE SEQUENCE [LARGE SCALE MRNA]</scope>
</reference>